<sequence length="61" mass="7389">MSFLKKSLFLVLFLGFVSFSICEEEKREDEEEENEREENKESEEKRNQEERPPGFTPFRVD</sequence>
<proteinExistence type="evidence at protein level"/>
<name>BRKP1_AGADC</name>
<feature type="signal peptide" evidence="1">
    <location>
        <begin position="1"/>
        <end position="22"/>
    </location>
</feature>
<feature type="propeptide" id="PRO_0000438933" evidence="6">
    <location>
        <begin position="23"/>
        <end position="50"/>
    </location>
</feature>
<feature type="peptide" id="PRO_0000438934" description="[Thr6]-bradykinyl-Val,Asp" evidence="3">
    <location>
        <begin position="51"/>
        <end position="61"/>
    </location>
</feature>
<feature type="peptide" id="PRO_0000438935" description="[Thr6]-bradykinin" evidence="3">
    <location>
        <begin position="51"/>
        <end position="59"/>
    </location>
</feature>
<feature type="region of interest" description="Disordered" evidence="2">
    <location>
        <begin position="24"/>
        <end position="61"/>
    </location>
</feature>
<feature type="compositionally biased region" description="Acidic residues" evidence="2">
    <location>
        <begin position="26"/>
        <end position="36"/>
    </location>
</feature>
<feature type="compositionally biased region" description="Basic and acidic residues" evidence="2">
    <location>
        <begin position="37"/>
        <end position="52"/>
    </location>
</feature>
<feature type="modified residue" description="4-hydroxyproline; in form [Hyp3,Thr6]-bradykinyl-Val,Asp and [Hyp3,Thr6]-bradykinin" evidence="3">
    <location>
        <position position="53"/>
    </location>
</feature>
<comment type="function">
    <molecule>[Thr6]-bradykinin</molecule>
    <text evidence="3">Induces relaxation of rat smooth muscle from tail artery (EC(50)=16.8 nM) and contraction of that from ileum (EC(50)=205 nM), urinary bladder (EC(50)=895 nM) and uterus (EC(50)=60.3 nM). Binds to both bradykinin receptor B1 (BDKRB1) and B2 (BDKRB2).</text>
</comment>
<comment type="function">
    <text evidence="3">[Hyp3,Thr6]-bradykinin: Induces relaxation of rat smooth muscle from tail artery (EC(50)=56.7 nM) and contraction of that from ileum (EC(50)=588 nM), urinary bladder (EC(50)=4.6 uM) and uterus (EC(50)=3.9 nM). Binds to both bradykinin receptor B1 (BDKRB1) and B2 (BDKRB2). In arterial smooth muscle, the effect via BDKRB1 is stronger, in uterus, ileum and urinary bladder the effect via BDKRB2.</text>
</comment>
<comment type="function">
    <molecule>[Thr6]-bradykinyl-Val,Asp</molecule>
    <text evidence="3">Induces relaxation of rat smooth muscle from tail artery (EC(50)=10.8 nM) and contraction of that from ileum (EC(50)=645 nM), urinary bladder (EC(50)=1.1 uM) and uterus (EC(50)=1.2 uM). Binds to both bradykinin receptor B1 (BDKRB1) and B2 (BDKRB2). Apart from uterus smooth muscle, the effect via BDKRB2 is stronger.</text>
</comment>
<comment type="function">
    <text evidence="3">[Hyp3,Thr6]-bradykinyl-Val,Asp: Induces relaxation of rat smooth muscle from tail artery (EC(50)=3.5 nM) and contraction of that from ileum (EC(50)=223 nM), urinary bladder (EC(50)=1.5 uM) and uterus (EC(50)=356 nM). Binds to both bradykinin receptor B1 (BDKRB1) and B2 (BDKRB2); the effects via BDKRB2 are stronger.</text>
</comment>
<comment type="subcellular location">
    <subcellularLocation>
        <location evidence="1 3">Secreted</location>
    </subcellularLocation>
</comment>
<comment type="tissue specificity">
    <text evidence="6">Expressed by the skin glands.</text>
</comment>
<comment type="mass spectrometry" mass="1303.55" method="MALDI" evidence="3">
    <molecule>[Thr6]-bradykinyl-Val,Asp</molecule>
    <text>[Hyp3,Thr6]-bradykinyl-Val,Asp.</text>
</comment>
<comment type="mass spectrometry" mass="1287.9" method="MALDI" evidence="3">
    <molecule>[Thr6]-bradykinyl-Val,Asp</molecule>
    <text>[Thr6]-bradykinyl-Val,Asp.</text>
</comment>
<comment type="mass spectrometry" mass="1089.7" method="MALDI" evidence="3">
    <molecule>[Thr6]-bradykinin</molecule>
    <text>[Hyp3,Thr6]-bradykinin.</text>
</comment>
<comment type="mass spectrometry" mass="1073.45" method="MALDI" evidence="3">
    <molecule>[Thr6]-bradykinin</molecule>
    <text>[Thr6]-bradykinin.</text>
</comment>
<comment type="similarity">
    <text evidence="5">Belongs to the frog skin active peptide (FSAP) family. Bradykinin-related peptide subfamily.</text>
</comment>
<keyword id="KW-0878">Amphibian defense peptide</keyword>
<keyword id="KW-0903">Direct protein sequencing</keyword>
<keyword id="KW-1213">G-protein coupled receptor impairing toxin</keyword>
<keyword id="KW-0379">Hydroxylation</keyword>
<keyword id="KW-0964">Secreted</keyword>
<keyword id="KW-0732">Signal</keyword>
<keyword id="KW-0800">Toxin</keyword>
<keyword id="KW-0838">Vasoactive</keyword>
<keyword id="KW-0840">Vasodilator</keyword>
<dbReference type="EMBL" id="HE967329">
    <property type="protein sequence ID" value="CCJ67650.1"/>
    <property type="molecule type" value="mRNA"/>
</dbReference>
<dbReference type="GO" id="GO:0005576">
    <property type="term" value="C:extracellular region"/>
    <property type="evidence" value="ECO:0000314"/>
    <property type="project" value="UniProtKB"/>
</dbReference>
<dbReference type="GO" id="GO:0090729">
    <property type="term" value="F:toxin activity"/>
    <property type="evidence" value="ECO:0007669"/>
    <property type="project" value="UniProtKB-KW"/>
</dbReference>
<dbReference type="GO" id="GO:0006952">
    <property type="term" value="P:defense response"/>
    <property type="evidence" value="ECO:0007669"/>
    <property type="project" value="UniProtKB-KW"/>
</dbReference>
<dbReference type="GO" id="GO:0042311">
    <property type="term" value="P:vasodilation"/>
    <property type="evidence" value="ECO:0007669"/>
    <property type="project" value="UniProtKB-KW"/>
</dbReference>
<dbReference type="InterPro" id="IPR004275">
    <property type="entry name" value="Frog_antimicrobial_propeptide"/>
</dbReference>
<dbReference type="Pfam" id="PF03032">
    <property type="entry name" value="FSAP_sig_propep"/>
    <property type="match status" value="1"/>
</dbReference>
<reference evidence="7" key="1">
    <citation type="journal article" date="2014" name="Peptides">
        <title>Bradykinin-related peptides (BRPs) from skin secretions of three genera of phyllomedusine leaf frogs and their comparative pharmacological effects on mammalian smooth muscles.</title>
        <authorList>
            <person name="Jiang Y."/>
            <person name="Xi X."/>
            <person name="Ge L."/>
            <person name="Yang N."/>
            <person name="Hou X."/>
            <person name="Ma J."/>
            <person name="Ma C."/>
            <person name="Wu Y."/>
            <person name="Guo X."/>
            <person name="Li R."/>
            <person name="Zhou M."/>
            <person name="Wang L."/>
            <person name="Chen T."/>
            <person name="Shaw C."/>
        </authorList>
    </citation>
    <scope>NUCLEOTIDE SEQUENCE [MRNA]</scope>
    <scope>PROTEIN SEQUENCE OF 51-61</scope>
    <scope>FUNCTION</scope>
    <scope>SUBCELLULAR LOCATION</scope>
    <scope>TISSUE SPECIFICITY</scope>
    <scope>MASS SPECTROMETRY</scope>
    <scope>HYDROXYLATION AT PRO-53</scope>
    <scope>IDENTIFICATION BY MASS SPECTROMETRY</scope>
    <source>
        <tissue evidence="7">Skin</tissue>
        <tissue evidence="4">Skin secretion</tissue>
    </source>
</reference>
<accession>L0PIN3</accession>
<organism evidence="7">
    <name type="scientific">Agalychnis dacnicolor</name>
    <name type="common">Giant Mexican leaf frog</name>
    <name type="synonym">Pachymedusa dacnicolor</name>
    <dbReference type="NCBI Taxonomy" id="75988"/>
    <lineage>
        <taxon>Eukaryota</taxon>
        <taxon>Metazoa</taxon>
        <taxon>Chordata</taxon>
        <taxon>Craniata</taxon>
        <taxon>Vertebrata</taxon>
        <taxon>Euteleostomi</taxon>
        <taxon>Amphibia</taxon>
        <taxon>Batrachia</taxon>
        <taxon>Anura</taxon>
        <taxon>Neobatrachia</taxon>
        <taxon>Hyloidea</taxon>
        <taxon>Hylidae</taxon>
        <taxon>Phyllomedusinae</taxon>
        <taxon>Agalychnis</taxon>
    </lineage>
</organism>
<protein>
    <recommendedName>
        <fullName evidence="4">[Thr6]-bradykinyl-Val,Asp</fullName>
    </recommendedName>
    <alternativeName>
        <fullName evidence="4">Bradykinin-related peptide RD-11</fullName>
    </alternativeName>
    <component>
        <recommendedName>
            <fullName evidence="4">[Thr6]-bradykinin</fullName>
        </recommendedName>
    </component>
</protein>
<evidence type="ECO:0000255" key="1"/>
<evidence type="ECO:0000256" key="2">
    <source>
        <dbReference type="SAM" id="MobiDB-lite"/>
    </source>
</evidence>
<evidence type="ECO:0000269" key="3">
    <source>
    </source>
</evidence>
<evidence type="ECO:0000303" key="4">
    <source>
    </source>
</evidence>
<evidence type="ECO:0000305" key="5"/>
<evidence type="ECO:0000305" key="6">
    <source>
    </source>
</evidence>
<evidence type="ECO:0000312" key="7">
    <source>
        <dbReference type="EMBL" id="CCJ67650.1"/>
    </source>
</evidence>